<proteinExistence type="inferred from homology"/>
<comment type="subcellular location">
    <subcellularLocation>
        <location evidence="1">Cell inner membrane</location>
        <topology evidence="1">Multi-pass membrane protein</topology>
    </subcellularLocation>
</comment>
<comment type="similarity">
    <text evidence="3">Belongs to the IgaA family.</text>
</comment>
<comment type="sequence caution" evidence="3">
    <conflict type="erroneous initiation">
        <sequence resource="EMBL-CDS" id="BAB37663"/>
    </conflict>
    <text>Truncated N-terminus.</text>
</comment>
<feature type="chain" id="PRO_0000215015" description="Putative membrane protein IgaA homolog">
    <location>
        <begin position="1"/>
        <end position="711"/>
    </location>
</feature>
<feature type="topological domain" description="Periplasmic" evidence="2">
    <location>
        <position position="1"/>
    </location>
</feature>
<feature type="transmembrane region" description="Helical" evidence="2">
    <location>
        <begin position="2"/>
        <end position="22"/>
    </location>
</feature>
<feature type="topological domain" description="Cytoplasmic" evidence="2">
    <location>
        <begin position="23"/>
        <end position="204"/>
    </location>
</feature>
<feature type="transmembrane region" description="Helical" evidence="2">
    <location>
        <begin position="205"/>
        <end position="225"/>
    </location>
</feature>
<feature type="transmembrane region" description="Helical" evidence="2">
    <location>
        <begin position="226"/>
        <end position="246"/>
    </location>
</feature>
<feature type="topological domain" description="Cytoplasmic" evidence="2">
    <location>
        <begin position="247"/>
        <end position="339"/>
    </location>
</feature>
<feature type="transmembrane region" description="Helical" evidence="2">
    <location>
        <begin position="340"/>
        <end position="360"/>
    </location>
</feature>
<feature type="topological domain" description="Periplasmic" evidence="2">
    <location>
        <begin position="361"/>
        <end position="655"/>
    </location>
</feature>
<feature type="transmembrane region" description="Helical" evidence="2">
    <location>
        <begin position="656"/>
        <end position="676"/>
    </location>
</feature>
<feature type="topological domain" description="Cytoplasmic" evidence="2">
    <location>
        <begin position="677"/>
        <end position="711"/>
    </location>
</feature>
<sequence>MSTIVIFLAALLACSLLAGWLIKVRSRRRQLPWTNAFADAQTRKLTPEERSAVENYLESLTQVLQVPGPTGASAAPISLALNAESNNVMMLTHAITRYGISTDDPNKWRYYLDSVEVHLPPFWEQYINDENTVELIHTDSLPLVISLNGHTLQEYMQETRGYALQPVPSTQASIRGEESEQIELLNIRKETHEEYALSRPRGLREALLIVASFLMFFFCLITPDVFVPWLAGGALLLLGAGLWGLFAPPAKSSLREIHCLRGTPRRWGLFGENDQEQINNISLGIIDLVYPAHWQPYIAQDLGQQTDIDIYLDRHLVRQGRYLSLHDEVKNFPLQHWLRSTIIAAGSLLVLFMLLFWIPLDMPLKFTLSWMKGAQTIEATSVKQLADAGVRVGDTLRISGTGMCNIRTSGTWSAKTNSPFLPFDCSQIIWNDARSLPLPESELVNKATALTEAVNRQLHPKPEDESRVSASLRSAIQKSGMVLLDDFGDIVLKTADLCSAKDDCVRLKNALVNLGNSKDWDALVKRANAGKLDGVNVLLRPVSAESLDNLVATSTAPFITHETARAAQSLNSPAPGGFLIVSDEGSDFVDQPWPSASLYDYPPQEQWNAFQKLAQMLMHTPFNAEGIVTKIFTDANGTQHIGLHPIPDRSGLWRYLSTTLLLLTMLGSAIYNGVQAWRRYQRHRTRMMKIQAYYESCLNPQLITPSESLIE</sequence>
<protein>
    <recommendedName>
        <fullName>Putative membrane protein IgaA homolog</fullName>
    </recommendedName>
</protein>
<keyword id="KW-0997">Cell inner membrane</keyword>
<keyword id="KW-1003">Cell membrane</keyword>
<keyword id="KW-0472">Membrane</keyword>
<keyword id="KW-1185">Reference proteome</keyword>
<keyword id="KW-0812">Transmembrane</keyword>
<keyword id="KW-1133">Transmembrane helix</keyword>
<dbReference type="EMBL" id="AE005174">
    <property type="protein sequence ID" value="AAG58498.1"/>
    <property type="molecule type" value="Genomic_DNA"/>
</dbReference>
<dbReference type="EMBL" id="BA000007">
    <property type="protein sequence ID" value="BAB37663.2"/>
    <property type="status" value="ALT_INIT"/>
    <property type="molecule type" value="Genomic_DNA"/>
</dbReference>
<dbReference type="PIR" id="F86004">
    <property type="entry name" value="F86004"/>
</dbReference>
<dbReference type="PIR" id="H91158">
    <property type="entry name" value="H91158"/>
</dbReference>
<dbReference type="RefSeq" id="NP_312267.1">
    <property type="nucleotide sequence ID" value="NC_002695.1"/>
</dbReference>
<dbReference type="BMRB" id="P58720"/>
<dbReference type="SMR" id="P58720"/>
<dbReference type="STRING" id="155864.Z4752"/>
<dbReference type="KEGG" id="ece:Z4752"/>
<dbReference type="KEGG" id="ecs:ECs_4240"/>
<dbReference type="PATRIC" id="fig|386585.9.peg.4427"/>
<dbReference type="eggNOG" id="ENOG502Z8KK">
    <property type="taxonomic scope" value="Bacteria"/>
</dbReference>
<dbReference type="HOGENOM" id="CLU_014723_0_0_6"/>
<dbReference type="OMA" id="LIYPPHW"/>
<dbReference type="Proteomes" id="UP000000558">
    <property type="component" value="Chromosome"/>
</dbReference>
<dbReference type="Proteomes" id="UP000002519">
    <property type="component" value="Chromosome"/>
</dbReference>
<dbReference type="GO" id="GO:0005886">
    <property type="term" value="C:plasma membrane"/>
    <property type="evidence" value="ECO:0007669"/>
    <property type="project" value="UniProtKB-SubCell"/>
</dbReference>
<dbReference type="InterPro" id="IPR010771">
    <property type="entry name" value="IgaA"/>
</dbReference>
<dbReference type="Pfam" id="PF07095">
    <property type="entry name" value="IgaA"/>
    <property type="match status" value="1"/>
</dbReference>
<reference key="1">
    <citation type="journal article" date="2001" name="Nature">
        <title>Genome sequence of enterohaemorrhagic Escherichia coli O157:H7.</title>
        <authorList>
            <person name="Perna N.T."/>
            <person name="Plunkett G. III"/>
            <person name="Burland V."/>
            <person name="Mau B."/>
            <person name="Glasner J.D."/>
            <person name="Rose D.J."/>
            <person name="Mayhew G.F."/>
            <person name="Evans P.S."/>
            <person name="Gregor J."/>
            <person name="Kirkpatrick H.A."/>
            <person name="Posfai G."/>
            <person name="Hackett J."/>
            <person name="Klink S."/>
            <person name="Boutin A."/>
            <person name="Shao Y."/>
            <person name="Miller L."/>
            <person name="Grotbeck E.J."/>
            <person name="Davis N.W."/>
            <person name="Lim A."/>
            <person name="Dimalanta E.T."/>
            <person name="Potamousis K."/>
            <person name="Apodaca J."/>
            <person name="Anantharaman T.S."/>
            <person name="Lin J."/>
            <person name="Yen G."/>
            <person name="Schwartz D.C."/>
            <person name="Welch R.A."/>
            <person name="Blattner F.R."/>
        </authorList>
    </citation>
    <scope>NUCLEOTIDE SEQUENCE [LARGE SCALE GENOMIC DNA]</scope>
    <source>
        <strain>O157:H7 / EDL933 / ATCC 700927 / EHEC</strain>
    </source>
</reference>
<reference key="2">
    <citation type="journal article" date="2001" name="DNA Res.">
        <title>Complete genome sequence of enterohemorrhagic Escherichia coli O157:H7 and genomic comparison with a laboratory strain K-12.</title>
        <authorList>
            <person name="Hayashi T."/>
            <person name="Makino K."/>
            <person name="Ohnishi M."/>
            <person name="Kurokawa K."/>
            <person name="Ishii K."/>
            <person name="Yokoyama K."/>
            <person name="Han C.-G."/>
            <person name="Ohtsubo E."/>
            <person name="Nakayama K."/>
            <person name="Murata T."/>
            <person name="Tanaka M."/>
            <person name="Tobe T."/>
            <person name="Iida T."/>
            <person name="Takami H."/>
            <person name="Honda T."/>
            <person name="Sasakawa C."/>
            <person name="Ogasawara N."/>
            <person name="Yasunaga T."/>
            <person name="Kuhara S."/>
            <person name="Shiba T."/>
            <person name="Hattori M."/>
            <person name="Shinagawa H."/>
        </authorList>
    </citation>
    <scope>NUCLEOTIDE SEQUENCE [LARGE SCALE GENOMIC DNA]</scope>
    <source>
        <strain>O157:H7 / Sakai / RIMD 0509952 / EHEC</strain>
    </source>
</reference>
<gene>
    <name type="primary">yrfF</name>
    <name type="ordered locus">Z4752</name>
    <name type="ordered locus">ECs4240</name>
</gene>
<organism>
    <name type="scientific">Escherichia coli O157:H7</name>
    <dbReference type="NCBI Taxonomy" id="83334"/>
    <lineage>
        <taxon>Bacteria</taxon>
        <taxon>Pseudomonadati</taxon>
        <taxon>Pseudomonadota</taxon>
        <taxon>Gammaproteobacteria</taxon>
        <taxon>Enterobacterales</taxon>
        <taxon>Enterobacteriaceae</taxon>
        <taxon>Escherichia</taxon>
    </lineage>
</organism>
<accession>P58720</accession>
<evidence type="ECO:0000250" key="1"/>
<evidence type="ECO:0000255" key="2"/>
<evidence type="ECO:0000305" key="3"/>
<name>IGAA_ECO57</name>